<accession>Q7L5A8</accession>
<accession>B7Z8T6</accession>
<accession>O75213</accession>
<accession>Q96DK1</accession>
<accession>Q9H1A5</accession>
<comment type="function">
    <text evidence="2 5 6 7 11">Catalyzes the hydroxylation of free fatty acids at the C-2 position to produce 2-hydroxy fatty acids, which are building blocks of sphingolipids and glycosphingolipids common in neural tissue and epidermis (PubMed:15337768, PubMed:15863841, PubMed:17355976, PubMed:22517924). FA2H is stereospecific for the production of (R)-2-hydroxy fatty acids (PubMed:22517924). Plays an essential role in the synthesis of galactosphingolipids of the myelin sheath (By similarity). Responsible for the synthesis of sphingolipids and glycosphingolipids involved in the formation of epidermal lamellar bodies critical for skin permeability barrier (PubMed:17355976). Participates in the synthesis of glycosphingolipids and a fraction of type II wax diesters in sebaceous gland, specifically regulating hair follicle homeostasis (By similarity). Involved in the synthesis of sphingolipids of plasma membrane rafts, controlling lipid raft mobility and trafficking of raft-associated proteins (By similarity).</text>
</comment>
<comment type="catalytic activity">
    <reaction evidence="11 18 19 20">
        <text>a 1,2-saturated fatty acid + 2 Fe(II)-[cytochrome b5] + O2 + 2 H(+) = a (R)-2-hydroxy fatty acid + 2 Fe(III)-[cytochrome b5] + H2O</text>
        <dbReference type="Rhea" id="RHEA:38855"/>
        <dbReference type="Rhea" id="RHEA-COMP:10438"/>
        <dbReference type="Rhea" id="RHEA-COMP:10439"/>
        <dbReference type="ChEBI" id="CHEBI:15377"/>
        <dbReference type="ChEBI" id="CHEBI:15378"/>
        <dbReference type="ChEBI" id="CHEBI:15379"/>
        <dbReference type="ChEBI" id="CHEBI:29033"/>
        <dbReference type="ChEBI" id="CHEBI:29034"/>
        <dbReference type="ChEBI" id="CHEBI:76177"/>
        <dbReference type="ChEBI" id="CHEBI:83955"/>
    </reaction>
    <physiologicalReaction direction="left-to-right" evidence="11">
        <dbReference type="Rhea" id="RHEA:38856"/>
    </physiologicalReaction>
</comment>
<comment type="catalytic activity">
    <reaction evidence="11 18">
        <text>hexadecanoate + 2 Fe(II)-[cytochrome b5] + O2 + 2 H(+) = (R)-2-hydroxyhexadecanoate + 2 Fe(III)-[cytochrome b5] + H2O</text>
        <dbReference type="Rhea" id="RHEA:38551"/>
        <dbReference type="Rhea" id="RHEA-COMP:10438"/>
        <dbReference type="Rhea" id="RHEA-COMP:10439"/>
        <dbReference type="ChEBI" id="CHEBI:7896"/>
        <dbReference type="ChEBI" id="CHEBI:15377"/>
        <dbReference type="ChEBI" id="CHEBI:15378"/>
        <dbReference type="ChEBI" id="CHEBI:15379"/>
        <dbReference type="ChEBI" id="CHEBI:29033"/>
        <dbReference type="ChEBI" id="CHEBI:29034"/>
        <dbReference type="ChEBI" id="CHEBI:75927"/>
    </reaction>
    <physiologicalReaction direction="left-to-right" evidence="11">
        <dbReference type="Rhea" id="RHEA:38552"/>
    </physiologicalReaction>
</comment>
<comment type="catalytic activity">
    <reaction evidence="5">
        <text>octadecanoate + 2 Fe(II)-[cytochrome b5] + O2 + 2 H(+) = (R)-2-hydroxyoctadecanoate + 2 Fe(III)-[cytochrome b5] + H2O</text>
        <dbReference type="Rhea" id="RHEA:39815"/>
        <dbReference type="Rhea" id="RHEA-COMP:10438"/>
        <dbReference type="Rhea" id="RHEA-COMP:10439"/>
        <dbReference type="ChEBI" id="CHEBI:15377"/>
        <dbReference type="ChEBI" id="CHEBI:15378"/>
        <dbReference type="ChEBI" id="CHEBI:15379"/>
        <dbReference type="ChEBI" id="CHEBI:25629"/>
        <dbReference type="ChEBI" id="CHEBI:29033"/>
        <dbReference type="ChEBI" id="CHEBI:29034"/>
        <dbReference type="ChEBI" id="CHEBI:57562"/>
    </reaction>
    <physiologicalReaction direction="left-to-right" evidence="5">
        <dbReference type="Rhea" id="RHEA:39816"/>
    </physiologicalReaction>
</comment>
<comment type="catalytic activity">
    <reaction evidence="5">
        <text>docosanoate + 2 Fe(II)-[cytochrome b5] + O2 + 2 H(+) = 2-hydroxydocosanoate + 2 Fe(III)-[cytochrome b5] + H2O</text>
        <dbReference type="Rhea" id="RHEA:39819"/>
        <dbReference type="Rhea" id="RHEA-COMP:10438"/>
        <dbReference type="Rhea" id="RHEA-COMP:10439"/>
        <dbReference type="ChEBI" id="CHEBI:15377"/>
        <dbReference type="ChEBI" id="CHEBI:15378"/>
        <dbReference type="ChEBI" id="CHEBI:15379"/>
        <dbReference type="ChEBI" id="CHEBI:23858"/>
        <dbReference type="ChEBI" id="CHEBI:29033"/>
        <dbReference type="ChEBI" id="CHEBI:29034"/>
        <dbReference type="ChEBI" id="CHEBI:76722"/>
    </reaction>
    <physiologicalReaction direction="left-to-right" evidence="5">
        <dbReference type="Rhea" id="RHEA:39820"/>
    </physiologicalReaction>
</comment>
<comment type="catalytic activity">
    <reaction evidence="5 6 7">
        <text>tetracosanoate + 2 Fe(II)-[cytochrome b5] + O2 + 2 H(+) = (R)-2-hydroxytetracosanoate + 2 Fe(III)-[cytochrome b5] + H2O</text>
        <dbReference type="Rhea" id="RHEA:38559"/>
        <dbReference type="Rhea" id="RHEA-COMP:10438"/>
        <dbReference type="Rhea" id="RHEA-COMP:10439"/>
        <dbReference type="ChEBI" id="CHEBI:15377"/>
        <dbReference type="ChEBI" id="CHEBI:15378"/>
        <dbReference type="ChEBI" id="CHEBI:15379"/>
        <dbReference type="ChEBI" id="CHEBI:29033"/>
        <dbReference type="ChEBI" id="CHEBI:29034"/>
        <dbReference type="ChEBI" id="CHEBI:31014"/>
        <dbReference type="ChEBI" id="CHEBI:75935"/>
    </reaction>
    <physiologicalReaction direction="left-to-right" evidence="5 7">
        <dbReference type="Rhea" id="RHEA:38560"/>
    </physiologicalReaction>
</comment>
<comment type="cofactor">
    <cofactor evidence="1">
        <name>Zn(2+)</name>
        <dbReference type="ChEBI" id="CHEBI:29105"/>
    </cofactor>
    <text evidence="1">Binds 2 Zn(2+) ions per subunit that likely form a catalytic dimetal center.</text>
</comment>
<comment type="biophysicochemical properties">
    <kinetics>
        <text evidence="6">KM&lt;0.18 uM for tetracosanoic acid.</text>
    </kinetics>
    <phDependence>
        <text evidence="6">Optimum pH is 7.6-7.8.</text>
    </phDependence>
</comment>
<comment type="pathway">
    <text evidence="6 11">Lipid metabolism; fatty acid metabolism.</text>
</comment>
<comment type="pathway">
    <text evidence="11">Sphingolipid metabolism; galactosylceramide biosynthesis.</text>
</comment>
<comment type="interaction">
    <interactant intactId="EBI-11337888">
        <id>Q7L5A8</id>
    </interactant>
    <interactant intactId="EBI-13059134">
        <id>Q13520</id>
        <label>AQP6</label>
    </interactant>
    <organismsDiffer>false</organismsDiffer>
    <experiments>3</experiments>
</comment>
<comment type="interaction">
    <interactant intactId="EBI-11337888">
        <id>Q7L5A8</id>
    </interactant>
    <interactant intactId="EBI-36513937">
        <id>Q5T9G4-2</id>
        <label>ARMC12</label>
    </interactant>
    <organismsDiffer>false</organismsDiffer>
    <experiments>3</experiments>
</comment>
<comment type="interaction">
    <interactant intactId="EBI-11337888">
        <id>Q7L5A8</id>
    </interactant>
    <interactant intactId="EBI-12808270">
        <id>P07307-3</id>
        <label>ASGR2</label>
    </interactant>
    <organismsDiffer>false</organismsDiffer>
    <experiments>3</experiments>
</comment>
<comment type="interaction">
    <interactant intactId="EBI-11337888">
        <id>Q7L5A8</id>
    </interactant>
    <interactant intactId="EBI-7797864">
        <id>P11912</id>
        <label>CD79A</label>
    </interactant>
    <organismsDiffer>false</organismsDiffer>
    <experiments>3</experiments>
</comment>
<comment type="interaction">
    <interactant intactId="EBI-11337888">
        <id>Q7L5A8</id>
    </interactant>
    <interactant intactId="EBI-6942903">
        <id>Q96BA8</id>
        <label>CREB3L1</label>
    </interactant>
    <organismsDiffer>false</organismsDiffer>
    <experiments>3</experiments>
</comment>
<comment type="interaction">
    <interactant intactId="EBI-11337888">
        <id>Q7L5A8</id>
    </interactant>
    <interactant intactId="EBI-80426">
        <id>Q15700</id>
        <label>DLG2</label>
    </interactant>
    <organismsDiffer>false</organismsDiffer>
    <experiments>3</experiments>
</comment>
<comment type="interaction">
    <interactant intactId="EBI-11337888">
        <id>Q7L5A8</id>
    </interactant>
    <interactant intactId="EBI-356015">
        <id>Q14204</id>
        <label>DYNC1H1</label>
    </interactant>
    <organismsDiffer>false</organismsDiffer>
    <experiments>3</experiments>
</comment>
<comment type="interaction">
    <interactant intactId="EBI-11337888">
        <id>Q7L5A8</id>
    </interactant>
    <interactant intactId="EBI-3915253">
        <id>Q15125</id>
        <label>EBP</label>
    </interactant>
    <organismsDiffer>false</organismsDiffer>
    <experiments>3</experiments>
</comment>
<comment type="interaction">
    <interactant intactId="EBI-11337888">
        <id>Q7L5A8</id>
    </interactant>
    <interactant intactId="EBI-18535450">
        <id>Q9GZR5</id>
        <label>ELOVL4</label>
    </interactant>
    <organismsDiffer>false</organismsDiffer>
    <experiments>3</experiments>
</comment>
<comment type="interaction">
    <interactant intactId="EBI-11337888">
        <id>Q7L5A8</id>
    </interactant>
    <interactant intactId="EBI-781551">
        <id>Q9Y282</id>
        <label>ERGIC3</label>
    </interactant>
    <organismsDiffer>false</organismsDiffer>
    <experiments>3</experiments>
</comment>
<comment type="interaction">
    <interactant intactId="EBI-11337888">
        <id>Q7L5A8</id>
    </interactant>
    <interactant intactId="EBI-359299">
        <id>O75477</id>
        <label>ERLIN1</label>
    </interactant>
    <organismsDiffer>false</organismsDiffer>
    <experiments>3</experiments>
</comment>
<comment type="interaction">
    <interactant intactId="EBI-11337888">
        <id>Q7L5A8</id>
    </interactant>
    <interactant intactId="EBI-18304435">
        <id>Q5JX71</id>
        <label>FAM209A</label>
    </interactant>
    <organismsDiffer>false</organismsDiffer>
    <experiments>3</experiments>
</comment>
<comment type="interaction">
    <interactant intactId="EBI-11337888">
        <id>Q7L5A8</id>
    </interactant>
    <interactant intactId="EBI-13345167">
        <id>Q8TDT2</id>
        <label>GPR152</label>
    </interactant>
    <organismsDiffer>false</organismsDiffer>
    <experiments>3</experiments>
</comment>
<comment type="interaction">
    <interactant intactId="EBI-11337888">
        <id>Q7L5A8</id>
    </interactant>
    <interactant intactId="EBI-11721746">
        <id>Q8TED1</id>
        <label>GPX8</label>
    </interactant>
    <organismsDiffer>false</organismsDiffer>
    <experiments>3</experiments>
</comment>
<comment type="interaction">
    <interactant intactId="EBI-11337888">
        <id>Q7L5A8</id>
    </interactant>
    <interactant intactId="EBI-2432309">
        <id>Q92876</id>
        <label>KLK6</label>
    </interactant>
    <organismsDiffer>false</organismsDiffer>
    <experiments>3</experiments>
</comment>
<comment type="interaction">
    <interactant intactId="EBI-11337888">
        <id>Q7L5A8</id>
    </interactant>
    <interactant intactId="EBI-14061946">
        <id>Q5T0T0</id>
        <label>MARCHF8</label>
    </interactant>
    <organismsDiffer>false</organismsDiffer>
    <experiments>3</experiments>
</comment>
<comment type="interaction">
    <interactant intactId="EBI-11337888">
        <id>Q7L5A8</id>
    </interactant>
    <interactant intactId="EBI-1776976">
        <id>P21757</id>
        <label>MSR1</label>
    </interactant>
    <organismsDiffer>false</organismsDiffer>
    <experiments>3</experiments>
</comment>
<comment type="interaction">
    <interactant intactId="EBI-11337888">
        <id>Q7L5A8</id>
    </interactant>
    <interactant intactId="EBI-594836">
        <id>O00623</id>
        <label>PEX12</label>
    </interactant>
    <organismsDiffer>false</organismsDiffer>
    <experiments>3</experiments>
</comment>
<comment type="interaction">
    <interactant intactId="EBI-11337888">
        <id>Q7L5A8</id>
    </interactant>
    <interactant intactId="EBI-1050125">
        <id>O15173</id>
        <label>PGRMC2</label>
    </interactant>
    <organismsDiffer>false</organismsDiffer>
    <experiments>3</experiments>
</comment>
<comment type="interaction">
    <interactant intactId="EBI-11337888">
        <id>Q7L5A8</id>
    </interactant>
    <interactant intactId="EBI-12375429">
        <id>Q7Z5B4-5</id>
        <label>RIC3</label>
    </interactant>
    <organismsDiffer>false</organismsDiffer>
    <experiments>3</experiments>
</comment>
<comment type="interaction">
    <interactant intactId="EBI-11337888">
        <id>Q7L5A8</id>
    </interactant>
    <interactant intactId="EBI-1046170">
        <id>O95470</id>
        <label>SGPL1</label>
    </interactant>
    <organismsDiffer>false</organismsDiffer>
    <experiments>3</experiments>
</comment>
<comment type="interaction">
    <interactant intactId="EBI-11337888">
        <id>Q7L5A8</id>
    </interactant>
    <interactant intactId="EBI-3923031">
        <id>Q14973</id>
        <label>SLC10A1</label>
    </interactant>
    <organismsDiffer>false</organismsDiffer>
    <experiments>3</experiments>
</comment>
<comment type="interaction">
    <interactant intactId="EBI-11337888">
        <id>Q7L5A8</id>
    </interactant>
    <interactant intactId="EBI-18159983">
        <id>Q3KNW5</id>
        <label>SLC10A6</label>
    </interactant>
    <organismsDiffer>false</organismsDiffer>
    <experiments>3</experiments>
</comment>
<comment type="interaction">
    <interactant intactId="EBI-11337888">
        <id>Q7L5A8</id>
    </interactant>
    <interactant intactId="EBI-8032987">
        <id>Q8N9I0</id>
        <label>SYT2</label>
    </interactant>
    <organismsDiffer>false</organismsDiffer>
    <experiments>3</experiments>
</comment>
<comment type="interaction">
    <interactant intactId="EBI-11337888">
        <id>Q7L5A8</id>
    </interactant>
    <interactant intactId="EBI-12947623">
        <id>Q96MV1</id>
        <label>TLCD4</label>
    </interactant>
    <organismsDiffer>false</organismsDiffer>
    <experiments>3</experiments>
</comment>
<comment type="interaction">
    <interactant intactId="EBI-11337888">
        <id>Q7L5A8</id>
    </interactant>
    <interactant intactId="EBI-8638294">
        <id>Q9NUH8</id>
        <label>TMEM14B</label>
    </interactant>
    <organismsDiffer>false</organismsDiffer>
    <experiments>3</experiments>
</comment>
<comment type="interaction">
    <interactant intactId="EBI-11337888">
        <id>Q7L5A8</id>
    </interactant>
    <interactant intactId="EBI-10288884">
        <id>Q96HV5</id>
        <label>TMEM41A</label>
    </interactant>
    <organismsDiffer>false</organismsDiffer>
    <experiments>3</experiments>
</comment>
<comment type="interaction">
    <interactant intactId="EBI-11337888">
        <id>Q7L5A8</id>
    </interactant>
    <interactant intactId="EBI-6447886">
        <id>Q9Y320</id>
        <label>TMX2</label>
    </interactant>
    <organismsDiffer>false</organismsDiffer>
    <experiments>3</experiments>
</comment>
<comment type="subcellular location">
    <subcellularLocation>
        <location evidence="2">Endoplasmic reticulum membrane</location>
        <topology evidence="5">Multi-pass membrane protein</topology>
    </subcellularLocation>
    <subcellularLocation>
        <location evidence="5">Microsome membrane</location>
        <topology evidence="5">Multi-pass membrane protein</topology>
    </subcellularLocation>
</comment>
<comment type="alternative products">
    <event type="alternative splicing"/>
    <isoform>
        <id>Q7L5A8-1</id>
        <name>1</name>
        <sequence type="displayed"/>
    </isoform>
    <isoform>
        <id>Q7L5A8-2</id>
        <name>2</name>
        <sequence type="described" ref="VSP_056135"/>
    </isoform>
</comment>
<comment type="tissue specificity">
    <text evidence="5 7">Detected in differentiating cultured keratinocytes (at protein level). Detected in epidermis and cultured keratinocytes (PubMed:17355976). Highly expressed in brain and colon. Detected at lower levels in testis, prostate, pancreas and kidney (PubMed:15337768).</text>
</comment>
<comment type="induction">
    <text evidence="7">Up-regulated during keratinocyte differentiation.</text>
</comment>
<comment type="domain">
    <text>The histidine box domains may contain the active site and/or be involved in metal ion binding.</text>
</comment>
<comment type="domain">
    <text evidence="5">The N-terminal cytochrome b5 heme-binding domain is essential for catalytic activity.</text>
</comment>
<comment type="disease" evidence="8 9 10">
    <disease id="DI-02936">
        <name>Spastic paraplegia 35, autosomal recessive, with or without neurodegeneration</name>
        <acronym>SPG35</acronym>
        <description>A form of spastic paraplegia, a neurodegenerative disorder characterized by a slow, gradual, progressive weakness and spasticity of the lower limbs. Rate of progression and the severity of symptoms are quite variable. Initial symptoms may include difficulty with balance, weakness and stiffness in the legs, muscle spasms, and dragging the toes when walking. In some forms of the disorder, bladder symptoms (such as incontinence) may appear, or the weakness and stiffness may spread to other parts of the body. SPG35 is a complicated form characterized by childhood onset of gait difficulties. It has a rapid progression and many patients become wheelchair-bound as young adults. Patients manifest cognitive decline associated with leukodystrophy. Other variable neurologic features, such as dystonia, optic atrophy, and seizures may also occur.</description>
        <dbReference type="MIM" id="612319"/>
    </disease>
    <text>The disease is caused by variants affecting the gene represented in this entry.</text>
</comment>
<comment type="similarity">
    <text evidence="17">Belongs to the sterol desaturase family. SCS7 subfamily.</text>
</comment>
<comment type="sequence caution" evidence="17">
    <conflict type="erroneous gene model prediction">
        <sequence resource="EMBL-CDS" id="AAC23496"/>
    </conflict>
</comment>
<organism>
    <name type="scientific">Homo sapiens</name>
    <name type="common">Human</name>
    <dbReference type="NCBI Taxonomy" id="9606"/>
    <lineage>
        <taxon>Eukaryota</taxon>
        <taxon>Metazoa</taxon>
        <taxon>Chordata</taxon>
        <taxon>Craniata</taxon>
        <taxon>Vertebrata</taxon>
        <taxon>Euteleostomi</taxon>
        <taxon>Mammalia</taxon>
        <taxon>Eutheria</taxon>
        <taxon>Euarchontoglires</taxon>
        <taxon>Primates</taxon>
        <taxon>Haplorrhini</taxon>
        <taxon>Catarrhini</taxon>
        <taxon>Hominidae</taxon>
        <taxon>Homo</taxon>
    </lineage>
</organism>
<dbReference type="EC" id="1.14.18.-" evidence="5 6 7 11"/>
<dbReference type="EMBL" id="AK058016">
    <property type="protein sequence ID" value="BAB71632.1"/>
    <property type="molecule type" value="mRNA"/>
</dbReference>
<dbReference type="EMBL" id="AK303878">
    <property type="protein sequence ID" value="BAH14072.1"/>
    <property type="molecule type" value="mRNA"/>
</dbReference>
<dbReference type="EMBL" id="AC004685">
    <property type="protein sequence ID" value="AAC23496.1"/>
    <property type="status" value="ALT_SEQ"/>
    <property type="molecule type" value="Genomic_DNA"/>
</dbReference>
<dbReference type="EMBL" id="AC009132">
    <property type="status" value="NOT_ANNOTATED_CDS"/>
    <property type="molecule type" value="Genomic_DNA"/>
</dbReference>
<dbReference type="EMBL" id="CH471114">
    <property type="protein sequence ID" value="EAW95678.1"/>
    <property type="molecule type" value="Genomic_DNA"/>
</dbReference>
<dbReference type="EMBL" id="BC002679">
    <property type="protein sequence ID" value="AAH02679.2"/>
    <property type="molecule type" value="mRNA"/>
</dbReference>
<dbReference type="EMBL" id="BC004263">
    <property type="protein sequence ID" value="AAH04263.2"/>
    <property type="molecule type" value="mRNA"/>
</dbReference>
<dbReference type="EMBL" id="BC017049">
    <property type="protein sequence ID" value="AAH17049.2"/>
    <property type="molecule type" value="mRNA"/>
</dbReference>
<dbReference type="EMBL" id="AJ278219">
    <property type="protein sequence ID" value="CAC20436.1"/>
    <property type="molecule type" value="mRNA"/>
</dbReference>
<dbReference type="CCDS" id="CCDS10911.1">
    <molecule id="Q7L5A8-1"/>
</dbReference>
<dbReference type="RefSeq" id="NP_077282.3">
    <molecule id="Q7L5A8-1"/>
    <property type="nucleotide sequence ID" value="NM_024306.4"/>
</dbReference>
<dbReference type="SMR" id="Q7L5A8"/>
<dbReference type="BioGRID" id="122570">
    <property type="interactions" value="50"/>
</dbReference>
<dbReference type="FunCoup" id="Q7L5A8">
    <property type="interactions" value="556"/>
</dbReference>
<dbReference type="IntAct" id="Q7L5A8">
    <property type="interactions" value="41"/>
</dbReference>
<dbReference type="MINT" id="Q7L5A8"/>
<dbReference type="STRING" id="9606.ENSP00000219368"/>
<dbReference type="BindingDB" id="Q7L5A8"/>
<dbReference type="ChEMBL" id="CHEMBL4879483"/>
<dbReference type="SwissLipids" id="SLP:000000328"/>
<dbReference type="SwissLipids" id="SLP:000000519"/>
<dbReference type="GlyGen" id="Q7L5A8">
    <property type="glycosylation" value="1 site, 1 O-linked glycan (1 site)"/>
</dbReference>
<dbReference type="iPTMnet" id="Q7L5A8"/>
<dbReference type="PhosphoSitePlus" id="Q7L5A8"/>
<dbReference type="SwissPalm" id="Q7L5A8"/>
<dbReference type="BioMuta" id="FA2H"/>
<dbReference type="DMDM" id="74749893"/>
<dbReference type="jPOST" id="Q7L5A8"/>
<dbReference type="MassIVE" id="Q7L5A8"/>
<dbReference type="PaxDb" id="9606-ENSP00000219368"/>
<dbReference type="PeptideAtlas" id="Q7L5A8"/>
<dbReference type="ProteomicsDB" id="68806">
    <molecule id="Q7L5A8-1"/>
</dbReference>
<dbReference type="Antibodypedia" id="30274">
    <property type="antibodies" value="228 antibodies from 30 providers"/>
</dbReference>
<dbReference type="DNASU" id="79152"/>
<dbReference type="Ensembl" id="ENST00000219368.8">
    <molecule id="Q7L5A8-1"/>
    <property type="protein sequence ID" value="ENSP00000219368.3"/>
    <property type="gene ID" value="ENSG00000103089.9"/>
</dbReference>
<dbReference type="GeneID" id="79152"/>
<dbReference type="KEGG" id="hsa:79152"/>
<dbReference type="MANE-Select" id="ENST00000219368.8">
    <property type="protein sequence ID" value="ENSP00000219368.3"/>
    <property type="RefSeq nucleotide sequence ID" value="NM_024306.5"/>
    <property type="RefSeq protein sequence ID" value="NP_077282.3"/>
</dbReference>
<dbReference type="UCSC" id="uc002fde.3">
    <molecule id="Q7L5A8-1"/>
    <property type="organism name" value="human"/>
</dbReference>
<dbReference type="AGR" id="HGNC:21197"/>
<dbReference type="CTD" id="79152"/>
<dbReference type="DisGeNET" id="79152"/>
<dbReference type="GeneCards" id="FA2H"/>
<dbReference type="GeneReviews" id="FA2H"/>
<dbReference type="HGNC" id="HGNC:21197">
    <property type="gene designation" value="FA2H"/>
</dbReference>
<dbReference type="HPA" id="ENSG00000103089">
    <property type="expression patterns" value="Group enriched (brain, stomach)"/>
</dbReference>
<dbReference type="MalaCards" id="FA2H"/>
<dbReference type="MIM" id="611026">
    <property type="type" value="gene"/>
</dbReference>
<dbReference type="MIM" id="612319">
    <property type="type" value="phenotype"/>
</dbReference>
<dbReference type="neXtProt" id="NX_Q7L5A8"/>
<dbReference type="OpenTargets" id="ENSG00000103089"/>
<dbReference type="Orphanet" id="171629">
    <property type="disease" value="Autosomal recessive spastic paraplegia type 35"/>
</dbReference>
<dbReference type="Orphanet" id="329308">
    <property type="disease" value="Fatty acid hydroxylase-associated neurodegeneration"/>
</dbReference>
<dbReference type="PharmGKB" id="PA145148065"/>
<dbReference type="VEuPathDB" id="HostDB:ENSG00000103089"/>
<dbReference type="eggNOG" id="KOG0537">
    <property type="taxonomic scope" value="Eukaryota"/>
</dbReference>
<dbReference type="eggNOG" id="KOG0539">
    <property type="taxonomic scope" value="Eukaryota"/>
</dbReference>
<dbReference type="GeneTree" id="ENSGT00390000002142"/>
<dbReference type="HOGENOM" id="CLU_034756_2_0_1"/>
<dbReference type="InParanoid" id="Q7L5A8"/>
<dbReference type="OMA" id="WTIIEYV"/>
<dbReference type="OrthoDB" id="2204368at2759"/>
<dbReference type="PAN-GO" id="Q7L5A8">
    <property type="GO annotations" value="3 GO annotations based on evolutionary models"/>
</dbReference>
<dbReference type="PhylomeDB" id="Q7L5A8"/>
<dbReference type="TreeFam" id="TF314955"/>
<dbReference type="BioCyc" id="MetaCyc:ENSG00000103089-MONOMER"/>
<dbReference type="BRENDA" id="1.14.18.6">
    <property type="organism ID" value="2681"/>
</dbReference>
<dbReference type="PathwayCommons" id="Q7L5A8"/>
<dbReference type="Reactome" id="R-HSA-1660661">
    <property type="pathway name" value="Sphingolipid de novo biosynthesis"/>
</dbReference>
<dbReference type="SignaLink" id="Q7L5A8"/>
<dbReference type="UniPathway" id="UPA00199"/>
<dbReference type="UniPathway" id="UPA00787"/>
<dbReference type="BioGRID-ORCS" id="79152">
    <property type="hits" value="10 hits in 1148 CRISPR screens"/>
</dbReference>
<dbReference type="ChiTaRS" id="FA2H">
    <property type="organism name" value="human"/>
</dbReference>
<dbReference type="GeneWiki" id="FA2H"/>
<dbReference type="GenomeRNAi" id="79152"/>
<dbReference type="Pharos" id="Q7L5A8">
    <property type="development level" value="Tbio"/>
</dbReference>
<dbReference type="PRO" id="PR:Q7L5A8"/>
<dbReference type="Proteomes" id="UP000005640">
    <property type="component" value="Chromosome 16"/>
</dbReference>
<dbReference type="RNAct" id="Q7L5A8">
    <property type="molecule type" value="protein"/>
</dbReference>
<dbReference type="Bgee" id="ENSG00000103089">
    <property type="expression patterns" value="Expressed in C1 segment of cervical spinal cord and 150 other cell types or tissues"/>
</dbReference>
<dbReference type="ExpressionAtlas" id="Q7L5A8">
    <property type="expression patterns" value="baseline and differential"/>
</dbReference>
<dbReference type="GO" id="GO:0005783">
    <property type="term" value="C:endoplasmic reticulum"/>
    <property type="evidence" value="ECO:0000318"/>
    <property type="project" value="GO_Central"/>
</dbReference>
<dbReference type="GO" id="GO:0005789">
    <property type="term" value="C:endoplasmic reticulum membrane"/>
    <property type="evidence" value="ECO:0000304"/>
    <property type="project" value="Reactome"/>
</dbReference>
<dbReference type="GO" id="GO:0016020">
    <property type="term" value="C:membrane"/>
    <property type="evidence" value="ECO:0000314"/>
    <property type="project" value="UniProtKB"/>
</dbReference>
<dbReference type="GO" id="GO:0120521">
    <property type="term" value="F:4-hydroxysphinganine ceramide fatty acyl 2-hydroxylase activity"/>
    <property type="evidence" value="ECO:0000314"/>
    <property type="project" value="FlyBase"/>
</dbReference>
<dbReference type="GO" id="GO:0080132">
    <property type="term" value="F:fatty acid 2-hydroxylase activity"/>
    <property type="evidence" value="ECO:0000314"/>
    <property type="project" value="UniProtKB"/>
</dbReference>
<dbReference type="GO" id="GO:0120520">
    <property type="term" value="F:free fatty acid 2-hydroxylase activity"/>
    <property type="evidence" value="ECO:0000314"/>
    <property type="project" value="FlyBase"/>
</dbReference>
<dbReference type="GO" id="GO:0020037">
    <property type="term" value="F:heme binding"/>
    <property type="evidence" value="ECO:0007669"/>
    <property type="project" value="InterPro"/>
</dbReference>
<dbReference type="GO" id="GO:0005506">
    <property type="term" value="F:iron ion binding"/>
    <property type="evidence" value="ECO:0007669"/>
    <property type="project" value="InterPro"/>
</dbReference>
<dbReference type="GO" id="GO:0032286">
    <property type="term" value="P:central nervous system myelin maintenance"/>
    <property type="evidence" value="ECO:0007669"/>
    <property type="project" value="Ensembl"/>
</dbReference>
<dbReference type="GO" id="GO:0046513">
    <property type="term" value="P:ceramide biosynthetic process"/>
    <property type="evidence" value="ECO:0000314"/>
    <property type="project" value="UniProtKB"/>
</dbReference>
<dbReference type="GO" id="GO:0061436">
    <property type="term" value="P:establishment of skin barrier"/>
    <property type="evidence" value="ECO:0000315"/>
    <property type="project" value="UniProtKB"/>
</dbReference>
<dbReference type="GO" id="GO:0006633">
    <property type="term" value="P:fatty acid biosynthetic process"/>
    <property type="evidence" value="ECO:0007669"/>
    <property type="project" value="UniProtKB-KW"/>
</dbReference>
<dbReference type="GO" id="GO:0006631">
    <property type="term" value="P:fatty acid metabolic process"/>
    <property type="evidence" value="ECO:0000318"/>
    <property type="project" value="GO_Central"/>
</dbReference>
<dbReference type="GO" id="GO:0006682">
    <property type="term" value="P:galactosylceramide biosynthetic process"/>
    <property type="evidence" value="ECO:0000250"/>
    <property type="project" value="UniProtKB"/>
</dbReference>
<dbReference type="GO" id="GO:0006679">
    <property type="term" value="P:glucosylceramide biosynthetic process"/>
    <property type="evidence" value="ECO:0000250"/>
    <property type="project" value="UniProtKB"/>
</dbReference>
<dbReference type="GO" id="GO:0030258">
    <property type="term" value="P:lipid modification"/>
    <property type="evidence" value="ECO:0007669"/>
    <property type="project" value="Ensembl"/>
</dbReference>
<dbReference type="GO" id="GO:0032287">
    <property type="term" value="P:peripheral nervous system myelin maintenance"/>
    <property type="evidence" value="ECO:0007669"/>
    <property type="project" value="Ensembl"/>
</dbReference>
<dbReference type="GO" id="GO:0044857">
    <property type="term" value="P:plasma membrane raft organization"/>
    <property type="evidence" value="ECO:0000250"/>
    <property type="project" value="UniProtKB"/>
</dbReference>
<dbReference type="GO" id="GO:1904697">
    <property type="term" value="P:regulation of acinar cell proliferation"/>
    <property type="evidence" value="ECO:0007669"/>
    <property type="project" value="Ensembl"/>
</dbReference>
<dbReference type="GO" id="GO:0042634">
    <property type="term" value="P:regulation of hair cycle"/>
    <property type="evidence" value="ECO:0007669"/>
    <property type="project" value="Ensembl"/>
</dbReference>
<dbReference type="GO" id="GO:1904002">
    <property type="term" value="P:regulation of sebum secreting cell proliferation"/>
    <property type="evidence" value="ECO:0007669"/>
    <property type="project" value="Ensembl"/>
</dbReference>
<dbReference type="GO" id="GO:0001949">
    <property type="term" value="P:sebaceous gland cell differentiation"/>
    <property type="evidence" value="ECO:0007669"/>
    <property type="project" value="Ensembl"/>
</dbReference>
<dbReference type="GO" id="GO:0030148">
    <property type="term" value="P:sphingolipid biosynthetic process"/>
    <property type="evidence" value="ECO:0000304"/>
    <property type="project" value="Reactome"/>
</dbReference>
<dbReference type="FunFam" id="3.10.120.10:FF:000011">
    <property type="entry name" value="Fatty acid 2-hydroxylase"/>
    <property type="match status" value="1"/>
</dbReference>
<dbReference type="Gene3D" id="3.10.120.10">
    <property type="entry name" value="Cytochrome b5-like heme/steroid binding domain"/>
    <property type="match status" value="1"/>
</dbReference>
<dbReference type="InterPro" id="IPR001199">
    <property type="entry name" value="Cyt_B5-like_heme/steroid-bd"/>
</dbReference>
<dbReference type="InterPro" id="IPR036400">
    <property type="entry name" value="Cyt_B5-like_heme/steroid_sf"/>
</dbReference>
<dbReference type="InterPro" id="IPR018506">
    <property type="entry name" value="Cyt_B5_heme-BS"/>
</dbReference>
<dbReference type="InterPro" id="IPR006694">
    <property type="entry name" value="Fatty_acid_hydroxylase"/>
</dbReference>
<dbReference type="InterPro" id="IPR014430">
    <property type="entry name" value="Scs7"/>
</dbReference>
<dbReference type="PANTHER" id="PTHR12863:SF1">
    <property type="entry name" value="FATTY ACID 2-HYDROXYLASE"/>
    <property type="match status" value="1"/>
</dbReference>
<dbReference type="PANTHER" id="PTHR12863">
    <property type="entry name" value="FATTY ACID HYDROXYLASE"/>
    <property type="match status" value="1"/>
</dbReference>
<dbReference type="Pfam" id="PF00173">
    <property type="entry name" value="Cyt-b5"/>
    <property type="match status" value="1"/>
</dbReference>
<dbReference type="Pfam" id="PF04116">
    <property type="entry name" value="FA_hydroxylase"/>
    <property type="match status" value="1"/>
</dbReference>
<dbReference type="PIRSF" id="PIRSF005149">
    <property type="entry name" value="IPC-B_HD"/>
    <property type="match status" value="1"/>
</dbReference>
<dbReference type="PRINTS" id="PR00363">
    <property type="entry name" value="CYTOCHROMEB5"/>
</dbReference>
<dbReference type="SMART" id="SM01117">
    <property type="entry name" value="Cyt-b5"/>
    <property type="match status" value="1"/>
</dbReference>
<dbReference type="SUPFAM" id="SSF55856">
    <property type="entry name" value="Cytochrome b5-like heme/steroid binding domain"/>
    <property type="match status" value="1"/>
</dbReference>
<dbReference type="PROSITE" id="PS00191">
    <property type="entry name" value="CYTOCHROME_B5_1"/>
    <property type="match status" value="1"/>
</dbReference>
<dbReference type="PROSITE" id="PS50255">
    <property type="entry name" value="CYTOCHROME_B5_2"/>
    <property type="match status" value="1"/>
</dbReference>
<reference key="1">
    <citation type="journal article" date="2004" name="Nat. Genet.">
        <title>Complete sequencing and characterization of 21,243 full-length human cDNAs.</title>
        <authorList>
            <person name="Ota T."/>
            <person name="Suzuki Y."/>
            <person name="Nishikawa T."/>
            <person name="Otsuki T."/>
            <person name="Sugiyama T."/>
            <person name="Irie R."/>
            <person name="Wakamatsu A."/>
            <person name="Hayashi K."/>
            <person name="Sato H."/>
            <person name="Nagai K."/>
            <person name="Kimura K."/>
            <person name="Makita H."/>
            <person name="Sekine M."/>
            <person name="Obayashi M."/>
            <person name="Nishi T."/>
            <person name="Shibahara T."/>
            <person name="Tanaka T."/>
            <person name="Ishii S."/>
            <person name="Yamamoto J."/>
            <person name="Saito K."/>
            <person name="Kawai Y."/>
            <person name="Isono Y."/>
            <person name="Nakamura Y."/>
            <person name="Nagahari K."/>
            <person name="Murakami K."/>
            <person name="Yasuda T."/>
            <person name="Iwayanagi T."/>
            <person name="Wagatsuma M."/>
            <person name="Shiratori A."/>
            <person name="Sudo H."/>
            <person name="Hosoiri T."/>
            <person name="Kaku Y."/>
            <person name="Kodaira H."/>
            <person name="Kondo H."/>
            <person name="Sugawara M."/>
            <person name="Takahashi M."/>
            <person name="Kanda K."/>
            <person name="Yokoi T."/>
            <person name="Furuya T."/>
            <person name="Kikkawa E."/>
            <person name="Omura Y."/>
            <person name="Abe K."/>
            <person name="Kamihara K."/>
            <person name="Katsuta N."/>
            <person name="Sato K."/>
            <person name="Tanikawa M."/>
            <person name="Yamazaki M."/>
            <person name="Ninomiya K."/>
            <person name="Ishibashi T."/>
            <person name="Yamashita H."/>
            <person name="Murakawa K."/>
            <person name="Fujimori K."/>
            <person name="Tanai H."/>
            <person name="Kimata M."/>
            <person name="Watanabe M."/>
            <person name="Hiraoka S."/>
            <person name="Chiba Y."/>
            <person name="Ishida S."/>
            <person name="Ono Y."/>
            <person name="Takiguchi S."/>
            <person name="Watanabe S."/>
            <person name="Yosida M."/>
            <person name="Hotuta T."/>
            <person name="Kusano J."/>
            <person name="Kanehori K."/>
            <person name="Takahashi-Fujii A."/>
            <person name="Hara H."/>
            <person name="Tanase T.-O."/>
            <person name="Nomura Y."/>
            <person name="Togiya S."/>
            <person name="Komai F."/>
            <person name="Hara R."/>
            <person name="Takeuchi K."/>
            <person name="Arita M."/>
            <person name="Imose N."/>
            <person name="Musashino K."/>
            <person name="Yuuki H."/>
            <person name="Oshima A."/>
            <person name="Sasaki N."/>
            <person name="Aotsuka S."/>
            <person name="Yoshikawa Y."/>
            <person name="Matsunawa H."/>
            <person name="Ichihara T."/>
            <person name="Shiohata N."/>
            <person name="Sano S."/>
            <person name="Moriya S."/>
            <person name="Momiyama H."/>
            <person name="Satoh N."/>
            <person name="Takami S."/>
            <person name="Terashima Y."/>
            <person name="Suzuki O."/>
            <person name="Nakagawa S."/>
            <person name="Senoh A."/>
            <person name="Mizoguchi H."/>
            <person name="Goto Y."/>
            <person name="Shimizu F."/>
            <person name="Wakebe H."/>
            <person name="Hishigaki H."/>
            <person name="Watanabe T."/>
            <person name="Sugiyama A."/>
            <person name="Takemoto M."/>
            <person name="Kawakami B."/>
            <person name="Yamazaki M."/>
            <person name="Watanabe K."/>
            <person name="Kumagai A."/>
            <person name="Itakura S."/>
            <person name="Fukuzumi Y."/>
            <person name="Fujimori Y."/>
            <person name="Komiyama M."/>
            <person name="Tashiro H."/>
            <person name="Tanigami A."/>
            <person name="Fujiwara T."/>
            <person name="Ono T."/>
            <person name="Yamada K."/>
            <person name="Fujii Y."/>
            <person name="Ozaki K."/>
            <person name="Hirao M."/>
            <person name="Ohmori Y."/>
            <person name="Kawabata A."/>
            <person name="Hikiji T."/>
            <person name="Kobatake N."/>
            <person name="Inagaki H."/>
            <person name="Ikema Y."/>
            <person name="Okamoto S."/>
            <person name="Okitani R."/>
            <person name="Kawakami T."/>
            <person name="Noguchi S."/>
            <person name="Itoh T."/>
            <person name="Shigeta K."/>
            <person name="Senba T."/>
            <person name="Matsumura K."/>
            <person name="Nakajima Y."/>
            <person name="Mizuno T."/>
            <person name="Morinaga M."/>
            <person name="Sasaki M."/>
            <person name="Togashi T."/>
            <person name="Oyama M."/>
            <person name="Hata H."/>
            <person name="Watanabe M."/>
            <person name="Komatsu T."/>
            <person name="Mizushima-Sugano J."/>
            <person name="Satoh T."/>
            <person name="Shirai Y."/>
            <person name="Takahashi Y."/>
            <person name="Nakagawa K."/>
            <person name="Okumura K."/>
            <person name="Nagase T."/>
            <person name="Nomura N."/>
            <person name="Kikuchi H."/>
            <person name="Masuho Y."/>
            <person name="Yamashita R."/>
            <person name="Nakai K."/>
            <person name="Yada T."/>
            <person name="Nakamura Y."/>
            <person name="Ohara O."/>
            <person name="Isogai T."/>
            <person name="Sugano S."/>
        </authorList>
    </citation>
    <scope>NUCLEOTIDE SEQUENCE [LARGE SCALE MRNA] (ISOFORMS 1 AND 2)</scope>
    <source>
        <tissue>Gastric mucosa</tissue>
        <tissue>Trachea</tissue>
    </source>
</reference>
<reference key="2">
    <citation type="journal article" date="2004" name="Nature">
        <title>The sequence and analysis of duplication-rich human chromosome 16.</title>
        <authorList>
            <person name="Martin J."/>
            <person name="Han C."/>
            <person name="Gordon L.A."/>
            <person name="Terry A."/>
            <person name="Prabhakar S."/>
            <person name="She X."/>
            <person name="Xie G."/>
            <person name="Hellsten U."/>
            <person name="Chan Y.M."/>
            <person name="Altherr M."/>
            <person name="Couronne O."/>
            <person name="Aerts A."/>
            <person name="Bajorek E."/>
            <person name="Black S."/>
            <person name="Blumer H."/>
            <person name="Branscomb E."/>
            <person name="Brown N.C."/>
            <person name="Bruno W.J."/>
            <person name="Buckingham J.M."/>
            <person name="Callen D.F."/>
            <person name="Campbell C.S."/>
            <person name="Campbell M.L."/>
            <person name="Campbell E.W."/>
            <person name="Caoile C."/>
            <person name="Challacombe J.F."/>
            <person name="Chasteen L.A."/>
            <person name="Chertkov O."/>
            <person name="Chi H.C."/>
            <person name="Christensen M."/>
            <person name="Clark L.M."/>
            <person name="Cohn J.D."/>
            <person name="Denys M."/>
            <person name="Detter J.C."/>
            <person name="Dickson M."/>
            <person name="Dimitrijevic-Bussod M."/>
            <person name="Escobar J."/>
            <person name="Fawcett J.J."/>
            <person name="Flowers D."/>
            <person name="Fotopulos D."/>
            <person name="Glavina T."/>
            <person name="Gomez M."/>
            <person name="Gonzales E."/>
            <person name="Goodstein D."/>
            <person name="Goodwin L.A."/>
            <person name="Grady D.L."/>
            <person name="Grigoriev I."/>
            <person name="Groza M."/>
            <person name="Hammon N."/>
            <person name="Hawkins T."/>
            <person name="Haydu L."/>
            <person name="Hildebrand C.E."/>
            <person name="Huang W."/>
            <person name="Israni S."/>
            <person name="Jett J."/>
            <person name="Jewett P.B."/>
            <person name="Kadner K."/>
            <person name="Kimball H."/>
            <person name="Kobayashi A."/>
            <person name="Krawczyk M.-C."/>
            <person name="Leyba T."/>
            <person name="Longmire J.L."/>
            <person name="Lopez F."/>
            <person name="Lou Y."/>
            <person name="Lowry S."/>
            <person name="Ludeman T."/>
            <person name="Manohar C.F."/>
            <person name="Mark G.A."/>
            <person name="McMurray K.L."/>
            <person name="Meincke L.J."/>
            <person name="Morgan J."/>
            <person name="Moyzis R.K."/>
            <person name="Mundt M.O."/>
            <person name="Munk A.C."/>
            <person name="Nandkeshwar R.D."/>
            <person name="Pitluck S."/>
            <person name="Pollard M."/>
            <person name="Predki P."/>
            <person name="Parson-Quintana B."/>
            <person name="Ramirez L."/>
            <person name="Rash S."/>
            <person name="Retterer J."/>
            <person name="Ricke D.O."/>
            <person name="Robinson D.L."/>
            <person name="Rodriguez A."/>
            <person name="Salamov A."/>
            <person name="Saunders E.H."/>
            <person name="Scott D."/>
            <person name="Shough T."/>
            <person name="Stallings R.L."/>
            <person name="Stalvey M."/>
            <person name="Sutherland R.D."/>
            <person name="Tapia R."/>
            <person name="Tesmer J.G."/>
            <person name="Thayer N."/>
            <person name="Thompson L.S."/>
            <person name="Tice H."/>
            <person name="Torney D.C."/>
            <person name="Tran-Gyamfi M."/>
            <person name="Tsai M."/>
            <person name="Ulanovsky L.E."/>
            <person name="Ustaszewska A."/>
            <person name="Vo N."/>
            <person name="White P.S."/>
            <person name="Williams A.L."/>
            <person name="Wills P.L."/>
            <person name="Wu J.-R."/>
            <person name="Wu K."/>
            <person name="Yang J."/>
            <person name="DeJong P."/>
            <person name="Bruce D."/>
            <person name="Doggett N.A."/>
            <person name="Deaven L."/>
            <person name="Schmutz J."/>
            <person name="Grimwood J."/>
            <person name="Richardson P."/>
            <person name="Rokhsar D.S."/>
            <person name="Eichler E.E."/>
            <person name="Gilna P."/>
            <person name="Lucas S.M."/>
            <person name="Myers R.M."/>
            <person name="Rubin E.M."/>
            <person name="Pennacchio L.A."/>
        </authorList>
    </citation>
    <scope>NUCLEOTIDE SEQUENCE [LARGE SCALE GENOMIC DNA]</scope>
</reference>
<reference key="3">
    <citation type="submission" date="2006-12" db="EMBL/GenBank/DDBJ databases">
        <authorList>
            <person name="Mural R.J."/>
            <person name="Istrail S."/>
            <person name="Sutton G.G."/>
            <person name="Florea L."/>
            <person name="Halpern A.L."/>
            <person name="Mobarry C.M."/>
            <person name="Lippert R."/>
            <person name="Walenz B."/>
            <person name="Shatkay H."/>
            <person name="Dew I."/>
            <person name="Miller J.R."/>
            <person name="Flanigan M.J."/>
            <person name="Edwards N.J."/>
            <person name="Bolanos R."/>
            <person name="Fasulo D."/>
            <person name="Halldorsson B.V."/>
            <person name="Hannenhalli S."/>
            <person name="Turner R."/>
            <person name="Yooseph S."/>
            <person name="Lu F."/>
            <person name="Nusskern D.R."/>
            <person name="Shue B.C."/>
            <person name="Zheng X.H."/>
            <person name="Zhong F."/>
            <person name="Delcher A.L."/>
            <person name="Huson D.H."/>
            <person name="Kravitz S.A."/>
            <person name="Mouchard L."/>
            <person name="Reinert K."/>
            <person name="Remington K.A."/>
            <person name="Clark A.G."/>
            <person name="Waterman M.S."/>
            <person name="Eichler E.E."/>
            <person name="Adams M.D."/>
            <person name="Hunkapiller M.W."/>
            <person name="Myers E.W."/>
            <person name="Venter J.C."/>
        </authorList>
    </citation>
    <scope>NUCLEOTIDE SEQUENCE [LARGE SCALE GENOMIC DNA]</scope>
</reference>
<reference key="4">
    <citation type="journal article" date="2004" name="Genome Res.">
        <title>The status, quality, and expansion of the NIH full-length cDNA project: the Mammalian Gene Collection (MGC).</title>
        <authorList>
            <consortium name="The MGC Project Team"/>
        </authorList>
    </citation>
    <scope>NUCLEOTIDE SEQUENCE [LARGE SCALE MRNA] (ISOFORM 1)</scope>
    <source>
        <tissue>Colon</tissue>
        <tissue>Pancreas</tissue>
    </source>
</reference>
<reference key="5">
    <citation type="submission" date="2000-05" db="EMBL/GenBank/DDBJ databases">
        <title>Cloning of human fatty acid hydroxylase.</title>
        <authorList>
            <person name="Van Veldhoven P.P."/>
        </authorList>
    </citation>
    <scope>NUCLEOTIDE SEQUENCE [MRNA] OF 93-372 (ISOFORM 1)</scope>
</reference>
<reference key="6">
    <citation type="journal article" date="2004" name="J. Biol. Chem.">
        <title>The human FA2H gene encodes a fatty acid 2-hydroxylase.</title>
        <authorList>
            <person name="Alderson N.L."/>
            <person name="Rembiesa B.M."/>
            <person name="Walla M.D."/>
            <person name="Bielawska A."/>
            <person name="Bielawski J."/>
            <person name="Hama H."/>
        </authorList>
    </citation>
    <scope>FUNCTION</scope>
    <scope>SUBCELLULAR LOCATION</scope>
    <scope>TISSUE SPECIFICITY</scope>
    <scope>DOMAIN</scope>
    <scope>CATALYTIC ACTIVITY</scope>
</reference>
<reference key="7">
    <citation type="journal article" date="2005" name="J. Lipid Res.">
        <title>A novel method for the measurement of in vitro fatty acid 2-hydroxylase activity by gas chromatography-mass spectrometry.</title>
        <authorList>
            <person name="Alderson N.L."/>
            <person name="Walla M.D."/>
            <person name="Hama H."/>
        </authorList>
    </citation>
    <scope>FUNCTION</scope>
    <scope>CATALYTIC ACTIVITY</scope>
    <scope>BIOPHYSICOCHEMICAL PROPERTIES</scope>
    <scope>PATHWAY</scope>
</reference>
<reference key="8">
    <citation type="journal article" date="2007" name="J. Biol. Chem.">
        <title>Fatty acid 2-hydroxylase, encoded by FA2H, accounts for differentiation-associated increase in 2-OH ceramides during keratinocyte differentiation.</title>
        <authorList>
            <person name="Uchida Y."/>
            <person name="Hama H."/>
            <person name="Alderson N.L."/>
            <person name="Douangpanya S."/>
            <person name="Wang Y."/>
            <person name="Crumrine D.A."/>
            <person name="Elias P.M."/>
            <person name="Holleran W.M."/>
        </authorList>
    </citation>
    <scope>FUNCTION</scope>
    <scope>INDUCTION</scope>
    <scope>TISSUE SPECIFICITY</scope>
    <scope>CATALYTIC ACTIVITY</scope>
</reference>
<reference key="9">
    <citation type="journal article" date="2012" name="J. Lipid Res.">
        <title>Stereospecificity of fatty acid 2-hydroxylase and differential functions of 2-hydroxy fatty acid enantiomers.</title>
        <authorList>
            <person name="Guo L."/>
            <person name="Zhang X."/>
            <person name="Zhou D."/>
            <person name="Okunade A.L."/>
            <person name="Su X."/>
        </authorList>
    </citation>
    <scope>FUNCTION</scope>
    <scope>CATALYTIC ACTIVITY</scope>
    <scope>PATHWAY</scope>
</reference>
<reference key="10">
    <citation type="journal article" date="2008" name="Am. J. Hum. Genet.">
        <title>Mutations in the fatty acid 2-hydroxylase gene are associated with leukodystrophy with spastic paraparesis and dystonia.</title>
        <authorList>
            <person name="Edvardson S."/>
            <person name="Hama H."/>
            <person name="Shaag A."/>
            <person name="Gomori J.M."/>
            <person name="Berger I."/>
            <person name="Soffer D."/>
            <person name="Korman S.H."/>
            <person name="Taustein I."/>
            <person name="Saada A."/>
            <person name="Elpeleg O."/>
        </authorList>
    </citation>
    <scope>VARIANT SPG35 TYR-35</scope>
</reference>
<reference key="11">
    <citation type="journal article" date="2010" name="Ann. Neurol.">
        <title>Defective FA2H leads to a novel form of neurodegeneration with brain iron accumulation (NBIA).</title>
        <authorList>
            <person name="Kruer M.C."/>
            <person name="Paisan-Ruiz C."/>
            <person name="Boddaert N."/>
            <person name="Yoon M.Y."/>
            <person name="Hama H."/>
            <person name="Gregory A."/>
            <person name="Malandrini A."/>
            <person name="Woltjer R.L."/>
            <person name="Munnich A."/>
            <person name="Gobin S."/>
            <person name="Polster B.J."/>
            <person name="Palmeri S."/>
            <person name="Edvardson S."/>
            <person name="Hardy J."/>
            <person name="Houlden H."/>
            <person name="Hayflick S.J."/>
        </authorList>
    </citation>
    <scope>VARIANT SPG35 CYS-154</scope>
</reference>
<reference key="12">
    <citation type="journal article" date="2010" name="Hum. Mutat.">
        <title>Mutation of FA2H underlies a complicated form of hereditary spastic paraplegia (SPG35).</title>
        <authorList>
            <person name="Dick K.J."/>
            <person name="Eckhardt M."/>
            <person name="Paisan-Ruiz C."/>
            <person name="Alshehhi A.A."/>
            <person name="Proukakis C."/>
            <person name="Sibtain N.A."/>
            <person name="Maier H."/>
            <person name="Sharifi R."/>
            <person name="Patton M.A."/>
            <person name="Bashir W."/>
            <person name="Koul R."/>
            <person name="Raeburn S."/>
            <person name="Gieselmann V."/>
            <person name="Houlden H."/>
            <person name="Crosby A.H."/>
        </authorList>
    </citation>
    <scope>VARIANTS SPG35 53-ARG--ILE-58 DEL AND CYS-235</scope>
    <scope>CHARACTERIZATION OF VARIANTS SPG35 53-ARG--ILE-58 DEL AND CYS-235</scope>
</reference>
<evidence type="ECO:0000250" key="1">
    <source>
        <dbReference type="UniProtKB" id="Q03529"/>
    </source>
</evidence>
<evidence type="ECO:0000250" key="2">
    <source>
        <dbReference type="UniProtKB" id="Q5MPP0"/>
    </source>
</evidence>
<evidence type="ECO:0000255" key="3"/>
<evidence type="ECO:0000255" key="4">
    <source>
        <dbReference type="PROSITE-ProRule" id="PRU00279"/>
    </source>
</evidence>
<evidence type="ECO:0000269" key="5">
    <source>
    </source>
</evidence>
<evidence type="ECO:0000269" key="6">
    <source>
    </source>
</evidence>
<evidence type="ECO:0000269" key="7">
    <source>
    </source>
</evidence>
<evidence type="ECO:0000269" key="8">
    <source>
    </source>
</evidence>
<evidence type="ECO:0000269" key="9">
    <source>
    </source>
</evidence>
<evidence type="ECO:0000269" key="10">
    <source>
    </source>
</evidence>
<evidence type="ECO:0000269" key="11">
    <source>
    </source>
</evidence>
<evidence type="ECO:0000303" key="12">
    <source>
    </source>
</evidence>
<evidence type="ECO:0000303" key="13">
    <source>
    </source>
</evidence>
<evidence type="ECO:0000303" key="14">
    <source>
    </source>
</evidence>
<evidence type="ECO:0000303" key="15">
    <source>
    </source>
</evidence>
<evidence type="ECO:0000303" key="16">
    <source>
    </source>
</evidence>
<evidence type="ECO:0000305" key="17"/>
<evidence type="ECO:0000305" key="18">
    <source>
    </source>
</evidence>
<evidence type="ECO:0000305" key="19">
    <source>
    </source>
</evidence>
<evidence type="ECO:0000305" key="20">
    <source>
    </source>
</evidence>
<evidence type="ECO:0000312" key="21">
    <source>
        <dbReference type="HGNC" id="HGNC:21197"/>
    </source>
</evidence>
<gene>
    <name evidence="13 14 15 16 21" type="primary">FA2H</name>
    <name type="synonym">FAAH</name>
    <name evidence="21" type="synonym">FAXDC1</name>
</gene>
<sequence length="372" mass="42791">MAPAPPPAASFSPSEVQRRLAAGACWVRRGARLYDLSSFVRHHPGGEQLLRARAGQDISADLDGPPHRHSANARRWLEQYYVGELRGEQQGSMENEPVALEETQKTDPAMEPRFKVVDWDKDLVDWRKPLLWQVGHLGEKYDEWVHQPVTRPIRLFHSDLIEGLSKTVWYSVPIIWVPLVLYLSWSYYRTFAQGNVRLFTSFTTEYTVAVPKSMFPGLFMLGTFLWSLIEYLIHRFLFHMKPPSDSYYLIMLHFVMHGQHHKAPFDGSRLVFPPVPASLVIGVFYLCMQLILPEAVGGTVFAGGLLGYVLYDMTHYYLHFGSPHKGSYLYSLKAHHVKHHFAHQKSGFGISTKLWDYCFHTLTPEKPHLKTQ</sequence>
<proteinExistence type="evidence at protein level"/>
<protein>
    <recommendedName>
        <fullName evidence="13 14 15 16">Fatty acid 2-hydroxylase</fullName>
        <ecNumber evidence="5 6 7 11">1.14.18.-</ecNumber>
    </recommendedName>
    <alternativeName>
        <fullName evidence="14">Fatty acid alpha-hydroxylase</fullName>
    </alternativeName>
    <alternativeName>
        <fullName evidence="21">Fatty acid hydroxylase domain-containing protein 1</fullName>
    </alternativeName>
</protein>
<feature type="chain" id="PRO_0000312349" description="Fatty acid 2-hydroxylase">
    <location>
        <begin position="1"/>
        <end position="372"/>
    </location>
</feature>
<feature type="transmembrane region" description="Helical" evidence="3">
    <location>
        <begin position="168"/>
        <end position="188"/>
    </location>
</feature>
<feature type="transmembrane region" description="Helical" evidence="3">
    <location>
        <begin position="213"/>
        <end position="233"/>
    </location>
</feature>
<feature type="transmembrane region" description="Helical" evidence="3">
    <location>
        <begin position="268"/>
        <end position="288"/>
    </location>
</feature>
<feature type="transmembrane region" description="Helical" evidence="3">
    <location>
        <begin position="290"/>
        <end position="310"/>
    </location>
</feature>
<feature type="domain" description="Cytochrome b5 heme-binding" evidence="4">
    <location>
        <begin position="8"/>
        <end position="86"/>
    </location>
</feature>
<feature type="domain" description="Fatty acid hydroxylase" evidence="3">
    <location>
        <begin position="219"/>
        <end position="361"/>
    </location>
</feature>
<feature type="binding site" description="axial binding residue" evidence="4">
    <location>
        <position position="43"/>
    </location>
    <ligand>
        <name>heme</name>
        <dbReference type="ChEBI" id="CHEBI:30413"/>
    </ligand>
    <ligandPart>
        <name>Fe</name>
        <dbReference type="ChEBI" id="CHEBI:18248"/>
    </ligandPart>
</feature>
<feature type="binding site" description="axial binding residue" evidence="4">
    <location>
        <position position="69"/>
    </location>
    <ligand>
        <name>heme</name>
        <dbReference type="ChEBI" id="CHEBI:30413"/>
    </ligand>
    <ligandPart>
        <name>Fe</name>
        <dbReference type="ChEBI" id="CHEBI:18248"/>
    </ligandPart>
</feature>
<feature type="binding site" evidence="1">
    <location>
        <position position="234"/>
    </location>
    <ligand>
        <name>Zn(2+)</name>
        <dbReference type="ChEBI" id="CHEBI:29105"/>
        <label>1</label>
    </ligand>
</feature>
<feature type="binding site" evidence="1">
    <location>
        <position position="239"/>
    </location>
    <ligand>
        <name>Zn(2+)</name>
        <dbReference type="ChEBI" id="CHEBI:29105"/>
        <label>1</label>
    </ligand>
</feature>
<feature type="binding site" evidence="1">
    <location>
        <position position="257"/>
    </location>
    <ligand>
        <name>Zn(2+)</name>
        <dbReference type="ChEBI" id="CHEBI:29105"/>
        <label>1</label>
    </ligand>
</feature>
<feature type="binding site" evidence="1">
    <location>
        <position position="260"/>
    </location>
    <ligand>
        <name>Zn(2+)</name>
        <dbReference type="ChEBI" id="CHEBI:29105"/>
        <label>2</label>
    </ligand>
</feature>
<feature type="binding site" evidence="1">
    <location>
        <position position="261"/>
    </location>
    <ligand>
        <name>Zn(2+)</name>
        <dbReference type="ChEBI" id="CHEBI:29105"/>
        <label>1</label>
    </ligand>
</feature>
<feature type="binding site" evidence="1">
    <location>
        <position position="315"/>
    </location>
    <ligand>
        <name>Zn(2+)</name>
        <dbReference type="ChEBI" id="CHEBI:29105"/>
        <label>2</label>
    </ligand>
</feature>
<feature type="binding site" evidence="1">
    <location>
        <position position="319"/>
    </location>
    <ligand>
        <name>Zn(2+)</name>
        <dbReference type="ChEBI" id="CHEBI:29105"/>
        <label>2</label>
    </ligand>
</feature>
<feature type="binding site" evidence="1">
    <location>
        <position position="336"/>
    </location>
    <ligand>
        <name>Zn(2+)</name>
        <dbReference type="ChEBI" id="CHEBI:29105"/>
        <label>2</label>
    </ligand>
</feature>
<feature type="binding site" evidence="1">
    <location>
        <position position="339"/>
    </location>
    <ligand>
        <name>Zn(2+)</name>
        <dbReference type="ChEBI" id="CHEBI:29105"/>
        <label>1</label>
    </ligand>
</feature>
<feature type="binding site" evidence="1">
    <location>
        <position position="340"/>
    </location>
    <ligand>
        <name>Zn(2+)</name>
        <dbReference type="ChEBI" id="CHEBI:29105"/>
        <label>2</label>
    </ligand>
</feature>
<feature type="splice variant" id="VSP_056135" description="In isoform 2." evidence="12">
    <location>
        <begin position="1"/>
        <end position="213"/>
    </location>
</feature>
<feature type="sequence variant" id="VAR_054893" description="In SPG35; patients present spastic paraparesis associated with leukodystrophy and dystonia; dbSNP:rs121918217." evidence="8">
    <original>D</original>
    <variation>Y</variation>
    <location>
        <position position="35"/>
    </location>
</feature>
<feature type="sequence variant" id="VAR_064620" description="In SPG35; significantly reduced enzymatic function." evidence="9">
    <location>
        <begin position="53"/>
        <end position="58"/>
    </location>
</feature>
<feature type="sequence variant" id="VAR_037503" description="In dbSNP:rs35874850.">
    <original>P</original>
    <variation>A</variation>
    <location>
        <position position="97"/>
    </location>
</feature>
<feature type="sequence variant" id="VAR_065245" description="In SPG35; dbSNP:rs387907040." evidence="10">
    <original>R</original>
    <variation>C</variation>
    <location>
        <position position="154"/>
    </location>
</feature>
<feature type="sequence variant" id="VAR_064621" description="In SPG35; significantly reduced enzymatic function; dbSNP:rs387907039." evidence="9">
    <original>R</original>
    <variation>C</variation>
    <location>
        <position position="235"/>
    </location>
</feature>
<feature type="sequence conflict" description="In Ref. 1; BAB71632." evidence="17" ref="1">
    <original>S</original>
    <variation>G</variation>
    <location>
        <position position="184"/>
    </location>
</feature>
<feature type="sequence conflict" description="In Ref. 1; BAB71632." evidence="17" ref="1">
    <original>D</original>
    <variation>G</variation>
    <location>
        <position position="356"/>
    </location>
</feature>
<name>FA2H_HUMAN</name>
<keyword id="KW-0025">Alternative splicing</keyword>
<keyword id="KW-0225">Disease variant</keyword>
<keyword id="KW-0256">Endoplasmic reticulum</keyword>
<keyword id="KW-0275">Fatty acid biosynthesis</keyword>
<keyword id="KW-0276">Fatty acid metabolism</keyword>
<keyword id="KW-0349">Heme</keyword>
<keyword id="KW-0890">Hereditary spastic paraplegia</keyword>
<keyword id="KW-0408">Iron</keyword>
<keyword id="KW-1026">Leukodystrophy</keyword>
<keyword id="KW-0444">Lipid biosynthesis</keyword>
<keyword id="KW-0443">Lipid metabolism</keyword>
<keyword id="KW-0472">Membrane</keyword>
<keyword id="KW-0479">Metal-binding</keyword>
<keyword id="KW-0492">Microsome</keyword>
<keyword id="KW-0523">Neurodegeneration</keyword>
<keyword id="KW-0560">Oxidoreductase</keyword>
<keyword id="KW-1267">Proteomics identification</keyword>
<keyword id="KW-1185">Reference proteome</keyword>
<keyword id="KW-0746">Sphingolipid metabolism</keyword>
<keyword id="KW-0812">Transmembrane</keyword>
<keyword id="KW-1133">Transmembrane helix</keyword>
<keyword id="KW-0862">Zinc</keyword>